<gene>
    <name evidence="1" type="primary">plsX</name>
    <name type="ordered locus">SSU98_0027</name>
</gene>
<dbReference type="EC" id="2.3.1.274" evidence="1"/>
<dbReference type="EMBL" id="CP000408">
    <property type="protein sequence ID" value="ABP91187.1"/>
    <property type="molecule type" value="Genomic_DNA"/>
</dbReference>
<dbReference type="SMR" id="A4VYJ8"/>
<dbReference type="KEGG" id="ssv:SSU98_0027"/>
<dbReference type="HOGENOM" id="CLU_039379_1_1_9"/>
<dbReference type="UniPathway" id="UPA00085"/>
<dbReference type="GO" id="GO:0005737">
    <property type="term" value="C:cytoplasm"/>
    <property type="evidence" value="ECO:0007669"/>
    <property type="project" value="UniProtKB-SubCell"/>
</dbReference>
<dbReference type="GO" id="GO:0043811">
    <property type="term" value="F:phosphate:acyl-[acyl carrier protein] acyltransferase activity"/>
    <property type="evidence" value="ECO:0007669"/>
    <property type="project" value="UniProtKB-UniRule"/>
</dbReference>
<dbReference type="GO" id="GO:0006633">
    <property type="term" value="P:fatty acid biosynthetic process"/>
    <property type="evidence" value="ECO:0007669"/>
    <property type="project" value="UniProtKB-UniRule"/>
</dbReference>
<dbReference type="GO" id="GO:0008654">
    <property type="term" value="P:phospholipid biosynthetic process"/>
    <property type="evidence" value="ECO:0007669"/>
    <property type="project" value="UniProtKB-KW"/>
</dbReference>
<dbReference type="Gene3D" id="3.40.718.10">
    <property type="entry name" value="Isopropylmalate Dehydrogenase"/>
    <property type="match status" value="1"/>
</dbReference>
<dbReference type="HAMAP" id="MF_00019">
    <property type="entry name" value="PlsX"/>
    <property type="match status" value="1"/>
</dbReference>
<dbReference type="InterPro" id="IPR003664">
    <property type="entry name" value="FA_synthesis"/>
</dbReference>
<dbReference type="InterPro" id="IPR012281">
    <property type="entry name" value="Phospholipid_synth_PlsX-like"/>
</dbReference>
<dbReference type="NCBIfam" id="TIGR00182">
    <property type="entry name" value="plsX"/>
    <property type="match status" value="1"/>
</dbReference>
<dbReference type="PANTHER" id="PTHR30100">
    <property type="entry name" value="FATTY ACID/PHOSPHOLIPID SYNTHESIS PROTEIN PLSX"/>
    <property type="match status" value="1"/>
</dbReference>
<dbReference type="PANTHER" id="PTHR30100:SF1">
    <property type="entry name" value="PHOSPHATE ACYLTRANSFERASE"/>
    <property type="match status" value="1"/>
</dbReference>
<dbReference type="Pfam" id="PF02504">
    <property type="entry name" value="FA_synthesis"/>
    <property type="match status" value="1"/>
</dbReference>
<dbReference type="PIRSF" id="PIRSF002465">
    <property type="entry name" value="Phsphlp_syn_PlsX"/>
    <property type="match status" value="1"/>
</dbReference>
<dbReference type="SUPFAM" id="SSF53659">
    <property type="entry name" value="Isocitrate/Isopropylmalate dehydrogenase-like"/>
    <property type="match status" value="1"/>
</dbReference>
<comment type="function">
    <text evidence="1">Catalyzes the reversible formation of acyl-phosphate (acyl-PO(4)) from acyl-[acyl-carrier-protein] (acyl-ACP). This enzyme utilizes acyl-ACP as fatty acyl donor, but not acyl-CoA.</text>
</comment>
<comment type="catalytic activity">
    <reaction evidence="1">
        <text>a fatty acyl-[ACP] + phosphate = an acyl phosphate + holo-[ACP]</text>
        <dbReference type="Rhea" id="RHEA:42292"/>
        <dbReference type="Rhea" id="RHEA-COMP:9685"/>
        <dbReference type="Rhea" id="RHEA-COMP:14125"/>
        <dbReference type="ChEBI" id="CHEBI:43474"/>
        <dbReference type="ChEBI" id="CHEBI:59918"/>
        <dbReference type="ChEBI" id="CHEBI:64479"/>
        <dbReference type="ChEBI" id="CHEBI:138651"/>
        <dbReference type="EC" id="2.3.1.274"/>
    </reaction>
</comment>
<comment type="pathway">
    <text evidence="1">Lipid metabolism; phospholipid metabolism.</text>
</comment>
<comment type="subunit">
    <text evidence="1">Homodimer. Probably interacts with PlsY.</text>
</comment>
<comment type="subcellular location">
    <subcellularLocation>
        <location evidence="1">Cytoplasm</location>
    </subcellularLocation>
    <text evidence="1">Associated with the membrane possibly through PlsY.</text>
</comment>
<comment type="similarity">
    <text evidence="1">Belongs to the PlsX family.</text>
</comment>
<feature type="chain" id="PRO_1000001845" description="Phosphate acyltransferase">
    <location>
        <begin position="1"/>
        <end position="335"/>
    </location>
</feature>
<keyword id="KW-0963">Cytoplasm</keyword>
<keyword id="KW-0444">Lipid biosynthesis</keyword>
<keyword id="KW-0443">Lipid metabolism</keyword>
<keyword id="KW-0594">Phospholipid biosynthesis</keyword>
<keyword id="KW-1208">Phospholipid metabolism</keyword>
<keyword id="KW-0808">Transferase</keyword>
<sequence>MKRIAVDAMGGDHAPQAVVEGVNQALAAFPDIEIQLYGDEAKIKQYLTATERVSIVHTTEKINSDDEPVKAIRRKKEASMVLATKAVKDGQADAVLSAGNTGALLAAGVFVVGRIKNIDRPGLMSTLPTMDGKGFDMMDLGANAENIAHHLYQYGILGSFYAEHVRGVKQPRVGLLNNGTEDTKGTPVHQEAYKLLAEDKSINFIGNVEARELLNSVADVVVTDGFTGNAVLKTIEGTAKSIVGQLTGSIKNGGLRAKLGGLLVKPTLKKALGAMDYKTAGGAVLLGLKAPVIKAHGSSDAQSIFYTIKQTRSILEAGIVEKSVAKFSVVEESHD</sequence>
<protein>
    <recommendedName>
        <fullName evidence="1">Phosphate acyltransferase</fullName>
        <ecNumber evidence="1">2.3.1.274</ecNumber>
    </recommendedName>
    <alternativeName>
        <fullName evidence="1">Acyl-ACP phosphotransacylase</fullName>
    </alternativeName>
    <alternativeName>
        <fullName evidence="1">Acyl-[acyl-carrier-protein]--phosphate acyltransferase</fullName>
    </alternativeName>
    <alternativeName>
        <fullName evidence="1">Phosphate-acyl-ACP acyltransferase</fullName>
    </alternativeName>
</protein>
<name>PLSX_STRS2</name>
<reference key="1">
    <citation type="journal article" date="2007" name="PLoS ONE">
        <title>A glimpse of streptococcal toxic shock syndrome from comparative genomics of S. suis 2 Chinese isolates.</title>
        <authorList>
            <person name="Chen C."/>
            <person name="Tang J."/>
            <person name="Dong W."/>
            <person name="Wang C."/>
            <person name="Feng Y."/>
            <person name="Wang J."/>
            <person name="Zheng F."/>
            <person name="Pan X."/>
            <person name="Liu D."/>
            <person name="Li M."/>
            <person name="Song Y."/>
            <person name="Zhu X."/>
            <person name="Sun H."/>
            <person name="Feng T."/>
            <person name="Guo Z."/>
            <person name="Ju A."/>
            <person name="Ge J."/>
            <person name="Dong Y."/>
            <person name="Sun W."/>
            <person name="Jiang Y."/>
            <person name="Wang J."/>
            <person name="Yan J."/>
            <person name="Yang H."/>
            <person name="Wang X."/>
            <person name="Gao G.F."/>
            <person name="Yang R."/>
            <person name="Wang J."/>
            <person name="Yu J."/>
        </authorList>
    </citation>
    <scope>NUCLEOTIDE SEQUENCE [LARGE SCALE GENOMIC DNA]</scope>
    <source>
        <strain>98HAH33</strain>
    </source>
</reference>
<accession>A4VYJ8</accession>
<proteinExistence type="inferred from homology"/>
<organism>
    <name type="scientific">Streptococcus suis (strain 98HAH33)</name>
    <dbReference type="NCBI Taxonomy" id="391296"/>
    <lineage>
        <taxon>Bacteria</taxon>
        <taxon>Bacillati</taxon>
        <taxon>Bacillota</taxon>
        <taxon>Bacilli</taxon>
        <taxon>Lactobacillales</taxon>
        <taxon>Streptococcaceae</taxon>
        <taxon>Streptococcus</taxon>
    </lineage>
</organism>
<evidence type="ECO:0000255" key="1">
    <source>
        <dbReference type="HAMAP-Rule" id="MF_00019"/>
    </source>
</evidence>